<gene>
    <name type="primary">ARPC5L</name>
</gene>
<evidence type="ECO:0000250" key="1"/>
<evidence type="ECO:0000250" key="2">
    <source>
        <dbReference type="UniProtKB" id="Q9BPX5"/>
    </source>
</evidence>
<evidence type="ECO:0000305" key="3"/>
<accession>Q5R4M1</accession>
<name>ARP5L_PONAB</name>
<protein>
    <recommendedName>
        <fullName>Actin-related protein 2/3 complex subunit 5-like protein</fullName>
    </recommendedName>
    <alternativeName>
        <fullName>Arp2/3 complex 16 kDa subunit 2</fullName>
        <shortName>ARC16-2</shortName>
    </alternativeName>
</protein>
<comment type="function">
    <text evidence="1">May function as component of the Arp2/3 complex which is involved in regulation of actin polymerization and together with an activating nucleation-promoting factor (NPF) mediates the formation of branched actin networks.</text>
</comment>
<comment type="subunit">
    <text>May be a component of the Arp2/3 complex in which it may replace ARPC5.</text>
</comment>
<comment type="subcellular location">
    <subcellularLocation>
        <location evidence="1">Cytoplasm</location>
        <location evidence="1">Cytoskeleton</location>
    </subcellularLocation>
</comment>
<comment type="similarity">
    <text evidence="3">Belongs to the ARPC5 family.</text>
</comment>
<proteinExistence type="evidence at transcript level"/>
<feature type="chain" id="PRO_0000279482" description="Actin-related protein 2/3 complex subunit 5-like protein">
    <location>
        <begin position="1"/>
        <end position="153"/>
    </location>
</feature>
<feature type="modified residue" description="Phosphoserine" evidence="2">
    <location>
        <position position="64"/>
    </location>
</feature>
<sequence>MARNTLSSRFRRVDIDEFDENKFVDEQEEAAAAAAEPGPDPSEVDGLLRQGDMLRAFHAALRNSPVNTKNQAVKERAQGVVLKVLTNFKSSEIEQAVQSLDRNGVDLLMKYIYKGFEKPTENSSAVLLQWHEKALAVGGLGSIIRVLTARKTV</sequence>
<dbReference type="EMBL" id="CR861225">
    <property type="protein sequence ID" value="CAH93295.1"/>
    <property type="molecule type" value="mRNA"/>
</dbReference>
<dbReference type="RefSeq" id="NP_001126940.1">
    <property type="nucleotide sequence ID" value="NM_001133468.1"/>
</dbReference>
<dbReference type="SMR" id="Q5R4M1"/>
<dbReference type="FunCoup" id="Q5R4M1">
    <property type="interactions" value="1507"/>
</dbReference>
<dbReference type="STRING" id="9601.ENSPPYP00000021968"/>
<dbReference type="Ensembl" id="ENSPPYT00000022875.2">
    <property type="protein sequence ID" value="ENSPPYP00000021968.2"/>
    <property type="gene ID" value="ENSPPYG00000019604.2"/>
</dbReference>
<dbReference type="GeneID" id="100173958"/>
<dbReference type="KEGG" id="pon:100173958"/>
<dbReference type="CTD" id="81873"/>
<dbReference type="eggNOG" id="KOG3380">
    <property type="taxonomic scope" value="Eukaryota"/>
</dbReference>
<dbReference type="GeneTree" id="ENSGT00940000158501"/>
<dbReference type="InParanoid" id="Q5R4M1"/>
<dbReference type="OMA" id="LWHEKAF"/>
<dbReference type="OrthoDB" id="429520at2759"/>
<dbReference type="Proteomes" id="UP000001595">
    <property type="component" value="Chromosome 9"/>
</dbReference>
<dbReference type="GO" id="GO:0005885">
    <property type="term" value="C:Arp2/3 protein complex"/>
    <property type="evidence" value="ECO:0007669"/>
    <property type="project" value="InterPro"/>
</dbReference>
<dbReference type="GO" id="GO:0005737">
    <property type="term" value="C:cytoplasm"/>
    <property type="evidence" value="ECO:0007669"/>
    <property type="project" value="UniProtKB-KW"/>
</dbReference>
<dbReference type="GO" id="GO:0003779">
    <property type="term" value="F:actin binding"/>
    <property type="evidence" value="ECO:0007669"/>
    <property type="project" value="UniProtKB-KW"/>
</dbReference>
<dbReference type="GO" id="GO:0034314">
    <property type="term" value="P:Arp2/3 complex-mediated actin nucleation"/>
    <property type="evidence" value="ECO:0007669"/>
    <property type="project" value="InterPro"/>
</dbReference>
<dbReference type="GO" id="GO:0030833">
    <property type="term" value="P:regulation of actin filament polymerization"/>
    <property type="evidence" value="ECO:0007669"/>
    <property type="project" value="InterPro"/>
</dbReference>
<dbReference type="FunFam" id="1.25.40.190:FF:000001">
    <property type="entry name" value="Actin-related protein 2/3 complex subunit 5"/>
    <property type="match status" value="1"/>
</dbReference>
<dbReference type="Gene3D" id="1.25.40.190">
    <property type="entry name" value="Actin-related protein 2/3 complex subunit 5"/>
    <property type="match status" value="1"/>
</dbReference>
<dbReference type="InterPro" id="IPR006789">
    <property type="entry name" value="ARPC5"/>
</dbReference>
<dbReference type="InterPro" id="IPR036743">
    <property type="entry name" value="ARPC5_sf"/>
</dbReference>
<dbReference type="PANTHER" id="PTHR12644">
    <property type="entry name" value="ARP2/3 COMPLEX 16 KD SUBUNIT P16-ARC"/>
    <property type="match status" value="1"/>
</dbReference>
<dbReference type="Pfam" id="PF04699">
    <property type="entry name" value="P16-Arc"/>
    <property type="match status" value="1"/>
</dbReference>
<dbReference type="PIRSF" id="PIRSF039096">
    <property type="entry name" value="p16-ARC"/>
    <property type="match status" value="1"/>
</dbReference>
<dbReference type="SUPFAM" id="SSF69103">
    <property type="entry name" value="Arp2/3 complex 16 kDa subunit ARPC5"/>
    <property type="match status" value="1"/>
</dbReference>
<reference key="1">
    <citation type="submission" date="2004-11" db="EMBL/GenBank/DDBJ databases">
        <authorList>
            <consortium name="The German cDNA consortium"/>
        </authorList>
    </citation>
    <scope>NUCLEOTIDE SEQUENCE [LARGE SCALE MRNA]</scope>
    <source>
        <tissue>Brain cortex</tissue>
    </source>
</reference>
<organism>
    <name type="scientific">Pongo abelii</name>
    <name type="common">Sumatran orangutan</name>
    <name type="synonym">Pongo pygmaeus abelii</name>
    <dbReference type="NCBI Taxonomy" id="9601"/>
    <lineage>
        <taxon>Eukaryota</taxon>
        <taxon>Metazoa</taxon>
        <taxon>Chordata</taxon>
        <taxon>Craniata</taxon>
        <taxon>Vertebrata</taxon>
        <taxon>Euteleostomi</taxon>
        <taxon>Mammalia</taxon>
        <taxon>Eutheria</taxon>
        <taxon>Euarchontoglires</taxon>
        <taxon>Primates</taxon>
        <taxon>Haplorrhini</taxon>
        <taxon>Catarrhini</taxon>
        <taxon>Hominidae</taxon>
        <taxon>Pongo</taxon>
    </lineage>
</organism>
<keyword id="KW-0009">Actin-binding</keyword>
<keyword id="KW-0963">Cytoplasm</keyword>
<keyword id="KW-0206">Cytoskeleton</keyword>
<keyword id="KW-0597">Phosphoprotein</keyword>
<keyword id="KW-1185">Reference proteome</keyword>